<evidence type="ECO:0000250" key="1">
    <source>
        <dbReference type="UniProtKB" id="C8VTS4"/>
    </source>
</evidence>
<evidence type="ECO:0000255" key="2">
    <source>
        <dbReference type="PROSITE-ProRule" id="PRU01165"/>
    </source>
</evidence>
<evidence type="ECO:0000256" key="3">
    <source>
        <dbReference type="SAM" id="MobiDB-lite"/>
    </source>
</evidence>
<evidence type="ECO:0000269" key="4">
    <source>
    </source>
</evidence>
<evidence type="ECO:0000303" key="5">
    <source>
    </source>
</evidence>
<evidence type="ECO:0000305" key="6"/>
<feature type="chain" id="PRO_0000435782" description="Velvet complex subunit 2">
    <location>
        <begin position="1"/>
        <end position="448"/>
    </location>
</feature>
<feature type="domain" description="Velvet" evidence="2">
    <location>
        <begin position="155"/>
        <end position="431"/>
    </location>
</feature>
<feature type="region of interest" description="Disordered" evidence="3">
    <location>
        <begin position="1"/>
        <end position="153"/>
    </location>
</feature>
<feature type="region of interest" description="Disordered" evidence="3">
    <location>
        <begin position="224"/>
        <end position="306"/>
    </location>
</feature>
<feature type="compositionally biased region" description="Low complexity" evidence="3">
    <location>
        <begin position="15"/>
        <end position="34"/>
    </location>
</feature>
<feature type="compositionally biased region" description="Pro residues" evidence="3">
    <location>
        <begin position="35"/>
        <end position="44"/>
    </location>
</feature>
<feature type="compositionally biased region" description="Pro residues" evidence="3">
    <location>
        <begin position="52"/>
        <end position="61"/>
    </location>
</feature>
<feature type="compositionally biased region" description="Low complexity" evidence="3">
    <location>
        <begin position="96"/>
        <end position="107"/>
    </location>
</feature>
<feature type="compositionally biased region" description="Pro residues" evidence="3">
    <location>
        <begin position="116"/>
        <end position="132"/>
    </location>
</feature>
<feature type="compositionally biased region" description="Low complexity" evidence="3">
    <location>
        <begin position="260"/>
        <end position="292"/>
    </location>
</feature>
<name>VELB_GIBM7</name>
<accession>W7LFK5</accession>
<protein>
    <recommendedName>
        <fullName evidence="6">Velvet complex subunit 2</fullName>
    </recommendedName>
</protein>
<dbReference type="EMBL" id="CM000578">
    <property type="protein sequence ID" value="EWG38233.1"/>
    <property type="molecule type" value="Genomic_DNA"/>
</dbReference>
<dbReference type="RefSeq" id="XP_018744424.1">
    <property type="nucleotide sequence ID" value="XM_018888508.1"/>
</dbReference>
<dbReference type="SMR" id="W7LFK5"/>
<dbReference type="STRING" id="334819.W7LFK5"/>
<dbReference type="GeneID" id="30059790"/>
<dbReference type="KEGG" id="fvr:FVEG_01498"/>
<dbReference type="VEuPathDB" id="FungiDB:FVEG_01498"/>
<dbReference type="eggNOG" id="ENOG502S1B4">
    <property type="taxonomic scope" value="Eukaryota"/>
</dbReference>
<dbReference type="OrthoDB" id="133567at110618"/>
<dbReference type="Proteomes" id="UP000009096">
    <property type="component" value="Chromosome 1"/>
</dbReference>
<dbReference type="GO" id="GO:0005737">
    <property type="term" value="C:cytoplasm"/>
    <property type="evidence" value="ECO:0007669"/>
    <property type="project" value="UniProtKB-SubCell"/>
</dbReference>
<dbReference type="GO" id="GO:0005634">
    <property type="term" value="C:nucleus"/>
    <property type="evidence" value="ECO:0007669"/>
    <property type="project" value="UniProtKB-SubCell"/>
</dbReference>
<dbReference type="GO" id="GO:0030435">
    <property type="term" value="P:sporulation resulting in formation of a cellular spore"/>
    <property type="evidence" value="ECO:0007669"/>
    <property type="project" value="UniProtKB-KW"/>
</dbReference>
<dbReference type="Gene3D" id="2.60.40.3960">
    <property type="entry name" value="Velvet domain"/>
    <property type="match status" value="1"/>
</dbReference>
<dbReference type="InterPro" id="IPR021740">
    <property type="entry name" value="Velvet"/>
</dbReference>
<dbReference type="InterPro" id="IPR037525">
    <property type="entry name" value="Velvet_dom"/>
</dbReference>
<dbReference type="InterPro" id="IPR038491">
    <property type="entry name" value="Velvet_dom_sf"/>
</dbReference>
<dbReference type="PANTHER" id="PTHR33572">
    <property type="entry name" value="SPORE DEVELOPMENT REGULATOR VOSA"/>
    <property type="match status" value="1"/>
</dbReference>
<dbReference type="PANTHER" id="PTHR33572:SF3">
    <property type="entry name" value="VELVET COMPLEX SUBUNIT B"/>
    <property type="match status" value="1"/>
</dbReference>
<dbReference type="Pfam" id="PF11754">
    <property type="entry name" value="Velvet"/>
    <property type="match status" value="1"/>
</dbReference>
<dbReference type="PRINTS" id="PR01217">
    <property type="entry name" value="PRICHEXTENSN"/>
</dbReference>
<dbReference type="PROSITE" id="PS51821">
    <property type="entry name" value="VELVET"/>
    <property type="match status" value="1"/>
</dbReference>
<comment type="function">
    <text evidence="1 4">Component of the velvet transcription factor complex that controls sexual/asexual developmental ratio in response to light, promoting sexual development in the darkness while stimulating asexual sporulation under illumination (PubMed:24792348). The velvet complex acts as a global regulator for secondary metabolite gene expression (By similarity). Component of the VELB-VOS1 heterodimeric complex that plays a dual role in activating genes associated with spore maturation and repressing certain development-associated genes (By similarity). The VELB-VOS1 complex binds DNA through the DNA-binding domain of VOS1 that recognizes an 11-nucleotide consensus sequence 5'-CTGGCCGCGGC-3' consisting of two motifs in the promoters of key developmental regulatory genes (By similarity). Controls the expression of the fumonisins gene cluster (PubMed:24792348). Involved in cell wall integrity, cell surface hydrophobicity, hyphal polarity and conidiation pattern (PubMed:24792348). Involved in oxidative stress resistance by positively regulating the transcription of the catalase-encoding gene CAT2 (PubMed:24792348).</text>
</comment>
<comment type="subunit">
    <text evidence="1 4">Component of the heterotrimeric velvet complex composed of LAE1, VE1 and VELB; VE1 acting as a bridging protein between LAE1 and VEL2 (By similarity). Interacts with VE1 (PubMed:24792348). Forms a heterodimeric complex with VOS1; the formation of the VELB-VOS1 complex is light-dependent (By similarity).</text>
</comment>
<comment type="subcellular location">
    <subcellularLocation>
        <location evidence="1">Nucleus</location>
    </subcellularLocation>
    <subcellularLocation>
        <location evidence="1">Cytoplasm</location>
    </subcellularLocation>
    <text evidence="1">Nuclear localization is mediated by VE1 (By similarity).</text>
</comment>
<comment type="disruption phenotype">
    <text evidence="4">Suppresses aerial hyphal growth,reduced colony surface hydrophobicity on solid media, and increases the ratio of macroconidia to microconidia (PubMed:24792348). Reduces the production of fumonisins (PubMed:24792348).</text>
</comment>
<comment type="similarity">
    <text evidence="6">Belongs to the velvet family. VelB subfamily.</text>
</comment>
<proteinExistence type="evidence at protein level"/>
<gene>
    <name evidence="5" type="primary">VELB</name>
    <name type="ORF">FVEG_01498</name>
</gene>
<keyword id="KW-0963">Cytoplasm</keyword>
<keyword id="KW-0539">Nucleus</keyword>
<keyword id="KW-1185">Reference proteome</keyword>
<keyword id="KW-0749">Sporulation</keyword>
<keyword id="KW-0804">Transcription</keyword>
<keyword id="KW-0805">Transcription regulation</keyword>
<sequence>MNSAYHPPDMSQRIPGPAYSSSAPPPIHTYQQHQHPPPPLPPPSQHHHSSHPPLPPPPSAPHPHHQHPPPPPSHSLSSHQHHGQPPHHQPQPYAPAPYQQSQPSQYPRPHPHQQHVPPPSQHDEPPPPPSSGPSPTDHQKDSEYVPPSYSKIEEGSGWKYSLDVKQQPVRARMCGFGDKDRRPITPPPCVRLVIINTETGKEVDYNTLDHAMFVLSVDLWNHDEPGTPSYQQQSLPPSRESGYGQSQGMNYGQDYPPPVQQSYGPAPSYPPSSSYGPPQQYYPRHSGYSAEPSAPPPGAPFRNGYGQDQNALTRMAVVGGQPQGMFTRNLIGSLAASAFRLEDTEGQSGIWFVLQDLSVRTEGTFRLRFSFVNVGRPGGQGTNVNQGRAPILSSCYSESFHVYSAKKFPGVCESTPLSKKFANQGIKIPIRKDANIKGEGDEEMYDQN</sequence>
<reference key="1">
    <citation type="journal article" date="2010" name="Nature">
        <title>Comparative genomics reveals mobile pathogenicity chromosomes in Fusarium.</title>
        <authorList>
            <person name="Ma L.-J."/>
            <person name="van der Does H.C."/>
            <person name="Borkovich K.A."/>
            <person name="Coleman J.J."/>
            <person name="Daboussi M.-J."/>
            <person name="Di Pietro A."/>
            <person name="Dufresne M."/>
            <person name="Freitag M."/>
            <person name="Grabherr M."/>
            <person name="Henrissat B."/>
            <person name="Houterman P.M."/>
            <person name="Kang S."/>
            <person name="Shim W.-B."/>
            <person name="Woloshuk C."/>
            <person name="Xie X."/>
            <person name="Xu J.-R."/>
            <person name="Antoniw J."/>
            <person name="Baker S.E."/>
            <person name="Bluhm B.H."/>
            <person name="Breakspear A."/>
            <person name="Brown D.W."/>
            <person name="Butchko R.A.E."/>
            <person name="Chapman S."/>
            <person name="Coulson R."/>
            <person name="Coutinho P.M."/>
            <person name="Danchin E.G.J."/>
            <person name="Diener A."/>
            <person name="Gale L.R."/>
            <person name="Gardiner D.M."/>
            <person name="Goff S."/>
            <person name="Hammond-Kosack K.E."/>
            <person name="Hilburn K."/>
            <person name="Hua-Van A."/>
            <person name="Jonkers W."/>
            <person name="Kazan K."/>
            <person name="Kodira C.D."/>
            <person name="Koehrsen M."/>
            <person name="Kumar L."/>
            <person name="Lee Y.-H."/>
            <person name="Li L."/>
            <person name="Manners J.M."/>
            <person name="Miranda-Saavedra D."/>
            <person name="Mukherjee M."/>
            <person name="Park G."/>
            <person name="Park J."/>
            <person name="Park S.-Y."/>
            <person name="Proctor R.H."/>
            <person name="Regev A."/>
            <person name="Ruiz-Roldan M.C."/>
            <person name="Sain D."/>
            <person name="Sakthikumar S."/>
            <person name="Sykes S."/>
            <person name="Schwartz D.C."/>
            <person name="Turgeon B.G."/>
            <person name="Wapinski I."/>
            <person name="Yoder O."/>
            <person name="Young S."/>
            <person name="Zeng Q."/>
            <person name="Zhou S."/>
            <person name="Galagan J."/>
            <person name="Cuomo C.A."/>
            <person name="Kistler H.C."/>
            <person name="Rep M."/>
        </authorList>
    </citation>
    <scope>NUCLEOTIDE SEQUENCE [LARGE SCALE GENOMIC DNA]</scope>
    <source>
        <strain>M3125 / FGSC 7600</strain>
    </source>
</reference>
<reference key="2">
    <citation type="journal article" date="2014" name="Eukaryot. Cell">
        <title>Coordinated and distinct functions of velvet proteins in Fusarium verticillioides.</title>
        <authorList>
            <person name="Lan N."/>
            <person name="Zhang H."/>
            <person name="Hu C."/>
            <person name="Wang W."/>
            <person name="Calvo A.M."/>
            <person name="Harris S.D."/>
            <person name="Chen S."/>
            <person name="Li S."/>
        </authorList>
    </citation>
    <scope>IDENTIFICATION BY MASS SPECTROMETRY</scope>
    <scope>INTERACTION WITH VE1</scope>
    <scope>FUNCTION</scope>
    <scope>DISRUPTION PHENOTYPE</scope>
</reference>
<organism>
    <name type="scientific">Gibberella moniliformis (strain M3125 / FGSC 7600)</name>
    <name type="common">Maize ear and stalk rot fungus</name>
    <name type="synonym">Fusarium verticillioides</name>
    <dbReference type="NCBI Taxonomy" id="334819"/>
    <lineage>
        <taxon>Eukaryota</taxon>
        <taxon>Fungi</taxon>
        <taxon>Dikarya</taxon>
        <taxon>Ascomycota</taxon>
        <taxon>Pezizomycotina</taxon>
        <taxon>Sordariomycetes</taxon>
        <taxon>Hypocreomycetidae</taxon>
        <taxon>Hypocreales</taxon>
        <taxon>Nectriaceae</taxon>
        <taxon>Fusarium</taxon>
        <taxon>Fusarium fujikuroi species complex</taxon>
    </lineage>
</organism>